<comment type="function">
    <text evidence="1">Globin-coupled heme-based oxygen sensor protein displaying diguanylate cyclase (DGC) activity in response to oxygen availability. Thus, catalyzes the synthesis of cyclic diguanylate (c-di-GMP) via the condensation of 2 GTP molecules. Cyclic-di-GMP is a second messenger which controls cell surface-associated traits in bacteria (By similarity).</text>
</comment>
<comment type="catalytic activity">
    <reaction>
        <text>2 GTP = 3',3'-c-di-GMP + 2 diphosphate</text>
        <dbReference type="Rhea" id="RHEA:24898"/>
        <dbReference type="ChEBI" id="CHEBI:33019"/>
        <dbReference type="ChEBI" id="CHEBI:37565"/>
        <dbReference type="ChEBI" id="CHEBI:58805"/>
        <dbReference type="EC" id="2.7.7.65"/>
    </reaction>
</comment>
<comment type="cofactor">
    <cofactor evidence="1">
        <name>heme</name>
        <dbReference type="ChEBI" id="CHEBI:30413"/>
    </cofactor>
    <text evidence="1">Binds 1 heme group per subunit.</text>
</comment>
<comment type="cofactor">
    <cofactor evidence="1">
        <name>Mg(2+)</name>
        <dbReference type="ChEBI" id="CHEBI:18420"/>
    </cofactor>
    <text evidence="1">Binds 1 Mg(2+) ion per subunit.</text>
</comment>
<comment type="pathway">
    <text>Purine metabolism; 3',5'-cyclic di-GMP biosynthesis.</text>
</comment>
<comment type="domain">
    <text evidence="1">Is composed of an N-terminal sensory globin-fold domain that binds heme and oxygen, and a C-terminal GGDEF diguanylate cyclase domain.</text>
</comment>
<keyword id="KW-0342">GTP-binding</keyword>
<keyword id="KW-0349">Heme</keyword>
<keyword id="KW-0408">Iron</keyword>
<keyword id="KW-0460">Magnesium</keyword>
<keyword id="KW-0479">Metal-binding</keyword>
<keyword id="KW-0547">Nucleotide-binding</keyword>
<keyword id="KW-1185">Reference proteome</keyword>
<keyword id="KW-0808">Transferase</keyword>
<feature type="chain" id="PRO_0000201322" description="Diguanylate cyclase DosC">
    <location>
        <begin position="1"/>
        <end position="460"/>
    </location>
</feature>
<feature type="domain" description="GGDEF" evidence="3">
    <location>
        <begin position="325"/>
        <end position="458"/>
    </location>
</feature>
<feature type="active site" description="Proton acceptor" evidence="2">
    <location>
        <position position="376"/>
    </location>
</feature>
<feature type="binding site" description="proximal binding residue" evidence="1">
    <location>
        <position position="98"/>
    </location>
    <ligand>
        <name>heme</name>
        <dbReference type="ChEBI" id="CHEBI:30413"/>
    </ligand>
    <ligandPart>
        <name>Fe</name>
        <dbReference type="ChEBI" id="CHEBI:18248"/>
    </ligandPart>
</feature>
<feature type="binding site" evidence="1">
    <location>
        <position position="333"/>
    </location>
    <ligand>
        <name>Mg(2+)</name>
        <dbReference type="ChEBI" id="CHEBI:18420"/>
    </ligand>
</feature>
<feature type="binding site" evidence="1">
    <location>
        <position position="341"/>
    </location>
    <ligand>
        <name>substrate</name>
    </ligand>
</feature>
<feature type="binding site" evidence="1">
    <location>
        <position position="350"/>
    </location>
    <ligand>
        <name>substrate</name>
    </ligand>
</feature>
<feature type="binding site" evidence="1">
    <location>
        <position position="376"/>
    </location>
    <ligand>
        <name>Mg(2+)</name>
        <dbReference type="ChEBI" id="CHEBI:18420"/>
    </ligand>
</feature>
<feature type="site" description="Involved in oxygen binding and important for the stability of the Fe(II)-O(2) complex" evidence="1">
    <location>
        <position position="43"/>
    </location>
</feature>
<feature type="site" description="Important for oxygen binding and stability of the Fe(II)-O(2) complex" evidence="1">
    <location>
        <position position="60"/>
    </location>
</feature>
<feature type="site" description="Critical for restricting water access to the heme distal side to avoid rapid autoxidation" evidence="1">
    <location>
        <position position="65"/>
    </location>
</feature>
<feature type="site" description="Transition state stabilizer" evidence="2">
    <location>
        <position position="338"/>
    </location>
</feature>
<protein>
    <recommendedName>
        <fullName>Diguanylate cyclase DosC</fullName>
        <shortName>DGC</shortName>
        <ecNumber>2.7.7.65</ecNumber>
    </recommendedName>
    <alternativeName>
        <fullName>Direct oxygen-sensing cyclase</fullName>
    </alternativeName>
</protein>
<evidence type="ECO:0000250" key="1"/>
<evidence type="ECO:0000255" key="2"/>
<evidence type="ECO:0000255" key="3">
    <source>
        <dbReference type="PROSITE-ProRule" id="PRU00095"/>
    </source>
</evidence>
<name>DOSC_ECO57</name>
<reference key="1">
    <citation type="journal article" date="2001" name="Nature">
        <title>Genome sequence of enterohaemorrhagic Escherichia coli O157:H7.</title>
        <authorList>
            <person name="Perna N.T."/>
            <person name="Plunkett G. III"/>
            <person name="Burland V."/>
            <person name="Mau B."/>
            <person name="Glasner J.D."/>
            <person name="Rose D.J."/>
            <person name="Mayhew G.F."/>
            <person name="Evans P.S."/>
            <person name="Gregor J."/>
            <person name="Kirkpatrick H.A."/>
            <person name="Posfai G."/>
            <person name="Hackett J."/>
            <person name="Klink S."/>
            <person name="Boutin A."/>
            <person name="Shao Y."/>
            <person name="Miller L."/>
            <person name="Grotbeck E.J."/>
            <person name="Davis N.W."/>
            <person name="Lim A."/>
            <person name="Dimalanta E.T."/>
            <person name="Potamousis K."/>
            <person name="Apodaca J."/>
            <person name="Anantharaman T.S."/>
            <person name="Lin J."/>
            <person name="Yen G."/>
            <person name="Schwartz D.C."/>
            <person name="Welch R.A."/>
            <person name="Blattner F.R."/>
        </authorList>
    </citation>
    <scope>NUCLEOTIDE SEQUENCE [LARGE SCALE GENOMIC DNA]</scope>
    <source>
        <strain>O157:H7 / EDL933 / ATCC 700927 / EHEC</strain>
    </source>
</reference>
<reference key="2">
    <citation type="journal article" date="2001" name="DNA Res.">
        <title>Complete genome sequence of enterohemorrhagic Escherichia coli O157:H7 and genomic comparison with a laboratory strain K-12.</title>
        <authorList>
            <person name="Hayashi T."/>
            <person name="Makino K."/>
            <person name="Ohnishi M."/>
            <person name="Kurokawa K."/>
            <person name="Ishii K."/>
            <person name="Yokoyama K."/>
            <person name="Han C.-G."/>
            <person name="Ohtsubo E."/>
            <person name="Nakayama K."/>
            <person name="Murata T."/>
            <person name="Tanaka M."/>
            <person name="Tobe T."/>
            <person name="Iida T."/>
            <person name="Takami H."/>
            <person name="Honda T."/>
            <person name="Sasakawa C."/>
            <person name="Ogasawara N."/>
            <person name="Yasunaga T."/>
            <person name="Kuhara S."/>
            <person name="Shiba T."/>
            <person name="Hattori M."/>
            <person name="Shinagawa H."/>
        </authorList>
    </citation>
    <scope>NUCLEOTIDE SEQUENCE [LARGE SCALE GENOMIC DNA]</scope>
    <source>
        <strain>O157:H7 / Sakai / RIMD 0509952 / EHEC</strain>
    </source>
</reference>
<organism>
    <name type="scientific">Escherichia coli O157:H7</name>
    <dbReference type="NCBI Taxonomy" id="83334"/>
    <lineage>
        <taxon>Bacteria</taxon>
        <taxon>Pseudomonadati</taxon>
        <taxon>Pseudomonadota</taxon>
        <taxon>Gammaproteobacteria</taxon>
        <taxon>Enterobacterales</taxon>
        <taxon>Enterobacteriaceae</taxon>
        <taxon>Escherichia</taxon>
    </lineage>
</organism>
<dbReference type="EC" id="2.7.7.65"/>
<dbReference type="EMBL" id="AE005174">
    <property type="protein sequence ID" value="AAG56278.1"/>
    <property type="molecule type" value="Genomic_DNA"/>
</dbReference>
<dbReference type="EMBL" id="BA000007">
    <property type="protein sequence ID" value="BAB35518.1"/>
    <property type="molecule type" value="Genomic_DNA"/>
</dbReference>
<dbReference type="PIR" id="B85727">
    <property type="entry name" value="B85727"/>
</dbReference>
<dbReference type="PIR" id="G90890">
    <property type="entry name" value="G90890"/>
</dbReference>
<dbReference type="RefSeq" id="NP_310122.1">
    <property type="nucleotide sequence ID" value="NC_002695.1"/>
</dbReference>
<dbReference type="RefSeq" id="WP_000426292.1">
    <property type="nucleotide sequence ID" value="NZ_VOAI01000034.1"/>
</dbReference>
<dbReference type="SMR" id="P0AA90"/>
<dbReference type="STRING" id="155864.Z2219"/>
<dbReference type="GeneID" id="75171576"/>
<dbReference type="GeneID" id="917293"/>
<dbReference type="KEGG" id="ece:Z2219"/>
<dbReference type="KEGG" id="ecs:ECs_2095"/>
<dbReference type="PATRIC" id="fig|386585.9.peg.2200"/>
<dbReference type="eggNOG" id="COG3706">
    <property type="taxonomic scope" value="Bacteria"/>
</dbReference>
<dbReference type="HOGENOM" id="CLU_000445_11_5_6"/>
<dbReference type="OMA" id="LAMEVMS"/>
<dbReference type="UniPathway" id="UPA00599"/>
<dbReference type="Proteomes" id="UP000000558">
    <property type="component" value="Chromosome"/>
</dbReference>
<dbReference type="Proteomes" id="UP000002519">
    <property type="component" value="Chromosome"/>
</dbReference>
<dbReference type="GO" id="GO:0005886">
    <property type="term" value="C:plasma membrane"/>
    <property type="evidence" value="ECO:0007669"/>
    <property type="project" value="TreeGrafter"/>
</dbReference>
<dbReference type="GO" id="GO:0052621">
    <property type="term" value="F:diguanylate cyclase activity"/>
    <property type="evidence" value="ECO:0007669"/>
    <property type="project" value="UniProtKB-EC"/>
</dbReference>
<dbReference type="GO" id="GO:0005525">
    <property type="term" value="F:GTP binding"/>
    <property type="evidence" value="ECO:0007669"/>
    <property type="project" value="UniProtKB-KW"/>
</dbReference>
<dbReference type="GO" id="GO:0020037">
    <property type="term" value="F:heme binding"/>
    <property type="evidence" value="ECO:0007669"/>
    <property type="project" value="InterPro"/>
</dbReference>
<dbReference type="GO" id="GO:0046872">
    <property type="term" value="F:metal ion binding"/>
    <property type="evidence" value="ECO:0007669"/>
    <property type="project" value="UniProtKB-KW"/>
</dbReference>
<dbReference type="GO" id="GO:0019825">
    <property type="term" value="F:oxygen binding"/>
    <property type="evidence" value="ECO:0007669"/>
    <property type="project" value="InterPro"/>
</dbReference>
<dbReference type="GO" id="GO:0043709">
    <property type="term" value="P:cell adhesion involved in single-species biofilm formation"/>
    <property type="evidence" value="ECO:0007669"/>
    <property type="project" value="TreeGrafter"/>
</dbReference>
<dbReference type="GO" id="GO:1902201">
    <property type="term" value="P:negative regulation of bacterial-type flagellum-dependent cell motility"/>
    <property type="evidence" value="ECO:0007669"/>
    <property type="project" value="TreeGrafter"/>
</dbReference>
<dbReference type="CDD" id="cd01949">
    <property type="entry name" value="GGDEF"/>
    <property type="match status" value="1"/>
</dbReference>
<dbReference type="CDD" id="cd14757">
    <property type="entry name" value="GS_EcDosC-like_GGDEF"/>
    <property type="match status" value="1"/>
</dbReference>
<dbReference type="FunFam" id="3.30.70.270:FF:000001">
    <property type="entry name" value="Diguanylate cyclase domain protein"/>
    <property type="match status" value="1"/>
</dbReference>
<dbReference type="FunFam" id="1.10.490.10:FF:000007">
    <property type="entry name" value="Diguanylate cyclase DosC"/>
    <property type="match status" value="1"/>
</dbReference>
<dbReference type="Gene3D" id="3.30.70.270">
    <property type="match status" value="1"/>
</dbReference>
<dbReference type="Gene3D" id="1.10.490.10">
    <property type="entry name" value="Globins"/>
    <property type="match status" value="1"/>
</dbReference>
<dbReference type="InterPro" id="IPR050469">
    <property type="entry name" value="Diguanylate_Cyclase"/>
</dbReference>
<dbReference type="InterPro" id="IPR048442">
    <property type="entry name" value="DosC_2nd"/>
</dbReference>
<dbReference type="InterPro" id="IPR039435">
    <property type="entry name" value="DosC_GS"/>
</dbReference>
<dbReference type="InterPro" id="IPR000160">
    <property type="entry name" value="GGDEF_dom"/>
</dbReference>
<dbReference type="InterPro" id="IPR009050">
    <property type="entry name" value="Globin-like_sf"/>
</dbReference>
<dbReference type="InterPro" id="IPR044398">
    <property type="entry name" value="Globin-sensor_dom"/>
</dbReference>
<dbReference type="InterPro" id="IPR012292">
    <property type="entry name" value="Globin/Proto"/>
</dbReference>
<dbReference type="InterPro" id="IPR029787">
    <property type="entry name" value="Nucleotide_cyclase"/>
</dbReference>
<dbReference type="InterPro" id="IPR043128">
    <property type="entry name" value="Rev_trsase/Diguanyl_cyclase"/>
</dbReference>
<dbReference type="NCBIfam" id="TIGR00254">
    <property type="entry name" value="GGDEF"/>
    <property type="match status" value="1"/>
</dbReference>
<dbReference type="PANTHER" id="PTHR45138:SF9">
    <property type="entry name" value="DIGUANYLATE CYCLASE DGCM-RELATED"/>
    <property type="match status" value="1"/>
</dbReference>
<dbReference type="PANTHER" id="PTHR45138">
    <property type="entry name" value="REGULATORY COMPONENTS OF SENSORY TRANSDUCTION SYSTEM"/>
    <property type="match status" value="1"/>
</dbReference>
<dbReference type="Pfam" id="PF21118">
    <property type="entry name" value="DosC_2nd"/>
    <property type="match status" value="1"/>
</dbReference>
<dbReference type="Pfam" id="PF00990">
    <property type="entry name" value="GGDEF"/>
    <property type="match status" value="1"/>
</dbReference>
<dbReference type="Pfam" id="PF11563">
    <property type="entry name" value="Protoglobin"/>
    <property type="match status" value="1"/>
</dbReference>
<dbReference type="SMART" id="SM00267">
    <property type="entry name" value="GGDEF"/>
    <property type="match status" value="1"/>
</dbReference>
<dbReference type="SUPFAM" id="SSF46458">
    <property type="entry name" value="Globin-like"/>
    <property type="match status" value="1"/>
</dbReference>
<dbReference type="SUPFAM" id="SSF55073">
    <property type="entry name" value="Nucleotide cyclase"/>
    <property type="match status" value="1"/>
</dbReference>
<dbReference type="PROSITE" id="PS50887">
    <property type="entry name" value="GGDEF"/>
    <property type="match status" value="1"/>
</dbReference>
<accession>P0AA90</accession>
<accession>P77793</accession>
<gene>
    <name type="primary">dosC</name>
    <name type="ordered locus">Z2219</name>
    <name type="ordered locus">ECs2095</name>
</gene>
<proteinExistence type="inferred from homology"/>
<sequence length="460" mass="53178">MEMYFKRMKDEWTGLVEQADPPIRAKAAEIAVAHAHYLSIEFYRIVRIDPHAEEFLSNEQVERQLKSAMERWIINVLSAQVDDVERLIQIQHTVAEVHARIGIPVEIVEMGFRVLKKILYPVIFSSDYSAAEKLQVYHFSINSIDIAMEVMTRAFTFSDSSASKEDENYRIFSLLENAEEEKERQIASILSWEIDIIYKILLDSDLGSSLPLSQADFGLWFNHKGRHYFSGIAEVGHISRLIQDFDGIFNQTMRNTRNLNNRSLRVKFLLQIRNTVSQIITLLRELFEEVSRHEVGMDVLTKLLNRRFLPTIFKREIAHANRTGTPLSVLIIDVDKFKEINDTWGHNTGDEILRKVSQAFYDNVRSSDYVFRYGGDEFIIVLTEASENETLRTAERIRSRVEKTKLKAANGEDIALSLSIGAAMFNGHPDYERLIQIADEALYIAKRRGRNRVELWKASL</sequence>